<evidence type="ECO:0000255" key="1">
    <source>
        <dbReference type="HAMAP-Rule" id="MF_00113"/>
    </source>
</evidence>
<proteinExistence type="inferred from homology"/>
<comment type="function">
    <text evidence="1">Transfers and isomerizes the ribose moiety from AdoMet to the 7-aminomethyl group of 7-deazaguanine (preQ1-tRNA) to give epoxyqueuosine (oQ-tRNA).</text>
</comment>
<comment type="catalytic activity">
    <reaction evidence="1">
        <text>7-aminomethyl-7-carbaguanosine(34) in tRNA + S-adenosyl-L-methionine = epoxyqueuosine(34) in tRNA + adenine + L-methionine + 2 H(+)</text>
        <dbReference type="Rhea" id="RHEA:32155"/>
        <dbReference type="Rhea" id="RHEA-COMP:10342"/>
        <dbReference type="Rhea" id="RHEA-COMP:18582"/>
        <dbReference type="ChEBI" id="CHEBI:15378"/>
        <dbReference type="ChEBI" id="CHEBI:16708"/>
        <dbReference type="ChEBI" id="CHEBI:57844"/>
        <dbReference type="ChEBI" id="CHEBI:59789"/>
        <dbReference type="ChEBI" id="CHEBI:82833"/>
        <dbReference type="ChEBI" id="CHEBI:194443"/>
        <dbReference type="EC" id="2.4.99.17"/>
    </reaction>
</comment>
<comment type="pathway">
    <text evidence="1">tRNA modification; tRNA-queuosine biosynthesis.</text>
</comment>
<comment type="subunit">
    <text evidence="1">Monomer.</text>
</comment>
<comment type="subcellular location">
    <subcellularLocation>
        <location evidence="1">Cytoplasm</location>
    </subcellularLocation>
</comment>
<comment type="similarity">
    <text evidence="1">Belongs to the QueA family.</text>
</comment>
<gene>
    <name evidence="1" type="primary">queA</name>
    <name type="ordered locus">NTHI0351</name>
</gene>
<name>QUEA_HAEI8</name>
<reference key="1">
    <citation type="journal article" date="2005" name="J. Bacteriol.">
        <title>Genomic sequence of an otitis media isolate of nontypeable Haemophilus influenzae: comparative study with H. influenzae serotype d, strain KW20.</title>
        <authorList>
            <person name="Harrison A."/>
            <person name="Dyer D.W."/>
            <person name="Gillaspy A."/>
            <person name="Ray W.C."/>
            <person name="Mungur R."/>
            <person name="Carson M.B."/>
            <person name="Zhong H."/>
            <person name="Gipson J."/>
            <person name="Gipson M."/>
            <person name="Johnson L.S."/>
            <person name="Lewis L."/>
            <person name="Bakaletz L.O."/>
            <person name="Munson R.S. Jr."/>
        </authorList>
    </citation>
    <scope>NUCLEOTIDE SEQUENCE [LARGE SCALE GENOMIC DNA]</scope>
    <source>
        <strain>86-028NP</strain>
    </source>
</reference>
<sequence>MRVSDFNFDLPDELIARYPKTDRVSCRLLQLNGENGEIFHRTFSDVLDLIDQGDLLIFNNTHVIPARMFGRKASGGKIEVLVERMLDEHRFLAHIRSSKSPKEGAELFLGEDKLGENNGIKAVMKARHSSLFEVELSDKSTALLDVLQTIGHMPLPPYIDRPDEEADKECYQTVYSKVPGAVAAPTAGLHFDKNLLEKLKAKGVNFEFVTLHVGAGTFQPVRVENIEDHVMHAEYVEVSQEVCNAIIATKKAGKRVIAVGTTSVRSIESAALSAEEFGNPDLIEPYFSDTSIFIYPGKKFRVVDCLITNFHLPESTLIMLVSAFAGYKNTMNAYKHAVQEKYRFFSYGDAMFINKNSNVRELE</sequence>
<accession>Q4QNU2</accession>
<dbReference type="EC" id="2.4.99.17" evidence="1"/>
<dbReference type="EMBL" id="CP000057">
    <property type="protein sequence ID" value="AAX87305.1"/>
    <property type="molecule type" value="Genomic_DNA"/>
</dbReference>
<dbReference type="RefSeq" id="WP_011271941.1">
    <property type="nucleotide sequence ID" value="NC_007146.2"/>
</dbReference>
<dbReference type="SMR" id="Q4QNU2"/>
<dbReference type="KEGG" id="hit:NTHI0351"/>
<dbReference type="HOGENOM" id="CLU_039110_1_0_6"/>
<dbReference type="UniPathway" id="UPA00392"/>
<dbReference type="Proteomes" id="UP000002525">
    <property type="component" value="Chromosome"/>
</dbReference>
<dbReference type="GO" id="GO:0005737">
    <property type="term" value="C:cytoplasm"/>
    <property type="evidence" value="ECO:0007669"/>
    <property type="project" value="UniProtKB-SubCell"/>
</dbReference>
<dbReference type="GO" id="GO:0051075">
    <property type="term" value="F:S-adenosylmethionine:tRNA ribosyltransferase-isomerase activity"/>
    <property type="evidence" value="ECO:0007669"/>
    <property type="project" value="UniProtKB-EC"/>
</dbReference>
<dbReference type="GO" id="GO:0008616">
    <property type="term" value="P:queuosine biosynthetic process"/>
    <property type="evidence" value="ECO:0007669"/>
    <property type="project" value="UniProtKB-UniRule"/>
</dbReference>
<dbReference type="GO" id="GO:0002099">
    <property type="term" value="P:tRNA wobble guanine modification"/>
    <property type="evidence" value="ECO:0007669"/>
    <property type="project" value="TreeGrafter"/>
</dbReference>
<dbReference type="FunFam" id="2.40.10.240:FF:000001">
    <property type="entry name" value="S-adenosylmethionine:tRNA ribosyltransferase-isomerase"/>
    <property type="match status" value="1"/>
</dbReference>
<dbReference type="FunFam" id="3.40.1780.10:FF:000001">
    <property type="entry name" value="S-adenosylmethionine:tRNA ribosyltransferase-isomerase"/>
    <property type="match status" value="1"/>
</dbReference>
<dbReference type="Gene3D" id="2.40.10.240">
    <property type="entry name" value="QueA-like"/>
    <property type="match status" value="1"/>
</dbReference>
<dbReference type="Gene3D" id="3.40.1780.10">
    <property type="entry name" value="QueA-like"/>
    <property type="match status" value="1"/>
</dbReference>
<dbReference type="HAMAP" id="MF_00113">
    <property type="entry name" value="QueA"/>
    <property type="match status" value="1"/>
</dbReference>
<dbReference type="InterPro" id="IPR003699">
    <property type="entry name" value="QueA"/>
</dbReference>
<dbReference type="InterPro" id="IPR042118">
    <property type="entry name" value="QueA_dom1"/>
</dbReference>
<dbReference type="InterPro" id="IPR042119">
    <property type="entry name" value="QueA_dom2"/>
</dbReference>
<dbReference type="InterPro" id="IPR036100">
    <property type="entry name" value="QueA_sf"/>
</dbReference>
<dbReference type="NCBIfam" id="NF001140">
    <property type="entry name" value="PRK00147.1"/>
    <property type="match status" value="1"/>
</dbReference>
<dbReference type="NCBIfam" id="TIGR00113">
    <property type="entry name" value="queA"/>
    <property type="match status" value="1"/>
</dbReference>
<dbReference type="PANTHER" id="PTHR30307">
    <property type="entry name" value="S-ADENOSYLMETHIONINE:TRNA RIBOSYLTRANSFERASE-ISOMERASE"/>
    <property type="match status" value="1"/>
</dbReference>
<dbReference type="PANTHER" id="PTHR30307:SF0">
    <property type="entry name" value="S-ADENOSYLMETHIONINE:TRNA RIBOSYLTRANSFERASE-ISOMERASE"/>
    <property type="match status" value="1"/>
</dbReference>
<dbReference type="Pfam" id="PF02547">
    <property type="entry name" value="Queuosine_synth"/>
    <property type="match status" value="1"/>
</dbReference>
<dbReference type="SUPFAM" id="SSF111337">
    <property type="entry name" value="QueA-like"/>
    <property type="match status" value="1"/>
</dbReference>
<keyword id="KW-0963">Cytoplasm</keyword>
<keyword id="KW-0671">Queuosine biosynthesis</keyword>
<keyword id="KW-0949">S-adenosyl-L-methionine</keyword>
<keyword id="KW-0808">Transferase</keyword>
<organism>
    <name type="scientific">Haemophilus influenzae (strain 86-028NP)</name>
    <dbReference type="NCBI Taxonomy" id="281310"/>
    <lineage>
        <taxon>Bacteria</taxon>
        <taxon>Pseudomonadati</taxon>
        <taxon>Pseudomonadota</taxon>
        <taxon>Gammaproteobacteria</taxon>
        <taxon>Pasteurellales</taxon>
        <taxon>Pasteurellaceae</taxon>
        <taxon>Haemophilus</taxon>
    </lineage>
</organism>
<feature type="chain" id="PRO_0000231342" description="S-adenosylmethionine:tRNA ribosyltransferase-isomerase">
    <location>
        <begin position="1"/>
        <end position="363"/>
    </location>
</feature>
<protein>
    <recommendedName>
        <fullName evidence="1">S-adenosylmethionine:tRNA ribosyltransferase-isomerase</fullName>
        <ecNumber evidence="1">2.4.99.17</ecNumber>
    </recommendedName>
    <alternativeName>
        <fullName evidence="1">Queuosine biosynthesis protein QueA</fullName>
    </alternativeName>
</protein>